<feature type="chain" id="PRO_0000240517" description="Large ribosomal subunit protein eL14y">
    <location>
        <begin position="1"/>
        <end position="134"/>
    </location>
</feature>
<sequence length="134" mass="15505">MGFKRYVEIGRVALVNYGEDHGKLVVIVDVVDQNRALVDAPDMERIQMNFKRLSLTDIVIDINRVPKKKALIEAMEKADVKNKWEKSSWGRKLIVQKRRANLNDFDRFKIMLAKIKKAGVVRQELAKLKKEITA</sequence>
<reference key="1">
    <citation type="journal article" date="1999" name="Nature">
        <title>Sequence and analysis of chromosome 4 of the plant Arabidopsis thaliana.</title>
        <authorList>
            <person name="Mayer K.F.X."/>
            <person name="Schueller C."/>
            <person name="Wambutt R."/>
            <person name="Murphy G."/>
            <person name="Volckaert G."/>
            <person name="Pohl T."/>
            <person name="Duesterhoeft A."/>
            <person name="Stiekema W."/>
            <person name="Entian K.-D."/>
            <person name="Terryn N."/>
            <person name="Harris B."/>
            <person name="Ansorge W."/>
            <person name="Brandt P."/>
            <person name="Grivell L.A."/>
            <person name="Rieger M."/>
            <person name="Weichselgartner M."/>
            <person name="de Simone V."/>
            <person name="Obermaier B."/>
            <person name="Mache R."/>
            <person name="Mueller M."/>
            <person name="Kreis M."/>
            <person name="Delseny M."/>
            <person name="Puigdomenech P."/>
            <person name="Watson M."/>
            <person name="Schmidtheini T."/>
            <person name="Reichert B."/>
            <person name="Portetelle D."/>
            <person name="Perez-Alonso M."/>
            <person name="Boutry M."/>
            <person name="Bancroft I."/>
            <person name="Vos P."/>
            <person name="Hoheisel J."/>
            <person name="Zimmermann W."/>
            <person name="Wedler H."/>
            <person name="Ridley P."/>
            <person name="Langham S.-A."/>
            <person name="McCullagh B."/>
            <person name="Bilham L."/>
            <person name="Robben J."/>
            <person name="van der Schueren J."/>
            <person name="Grymonprez B."/>
            <person name="Chuang Y.-J."/>
            <person name="Vandenbussche F."/>
            <person name="Braeken M."/>
            <person name="Weltjens I."/>
            <person name="Voet M."/>
            <person name="Bastiaens I."/>
            <person name="Aert R."/>
            <person name="Defoor E."/>
            <person name="Weitzenegger T."/>
            <person name="Bothe G."/>
            <person name="Ramsperger U."/>
            <person name="Hilbert H."/>
            <person name="Braun M."/>
            <person name="Holzer E."/>
            <person name="Brandt A."/>
            <person name="Peters S."/>
            <person name="van Staveren M."/>
            <person name="Dirkse W."/>
            <person name="Mooijman P."/>
            <person name="Klein Lankhorst R."/>
            <person name="Rose M."/>
            <person name="Hauf J."/>
            <person name="Koetter P."/>
            <person name="Berneiser S."/>
            <person name="Hempel S."/>
            <person name="Feldpausch M."/>
            <person name="Lamberth S."/>
            <person name="Van den Daele H."/>
            <person name="De Keyser A."/>
            <person name="Buysshaert C."/>
            <person name="Gielen J."/>
            <person name="Villarroel R."/>
            <person name="De Clercq R."/>
            <person name="van Montagu M."/>
            <person name="Rogers J."/>
            <person name="Cronin A."/>
            <person name="Quail M.A."/>
            <person name="Bray-Allen S."/>
            <person name="Clark L."/>
            <person name="Doggett J."/>
            <person name="Hall S."/>
            <person name="Kay M."/>
            <person name="Lennard N."/>
            <person name="McLay K."/>
            <person name="Mayes R."/>
            <person name="Pettett A."/>
            <person name="Rajandream M.A."/>
            <person name="Lyne M."/>
            <person name="Benes V."/>
            <person name="Rechmann S."/>
            <person name="Borkova D."/>
            <person name="Bloecker H."/>
            <person name="Scharfe M."/>
            <person name="Grimm M."/>
            <person name="Loehnert T.-H."/>
            <person name="Dose S."/>
            <person name="de Haan M."/>
            <person name="Maarse A.C."/>
            <person name="Schaefer M."/>
            <person name="Mueller-Auer S."/>
            <person name="Gabel C."/>
            <person name="Fuchs M."/>
            <person name="Fartmann B."/>
            <person name="Granderath K."/>
            <person name="Dauner D."/>
            <person name="Herzl A."/>
            <person name="Neumann S."/>
            <person name="Argiriou A."/>
            <person name="Vitale D."/>
            <person name="Liguori R."/>
            <person name="Piravandi E."/>
            <person name="Massenet O."/>
            <person name="Quigley F."/>
            <person name="Clabauld G."/>
            <person name="Muendlein A."/>
            <person name="Felber R."/>
            <person name="Schnabl S."/>
            <person name="Hiller R."/>
            <person name="Schmidt W."/>
            <person name="Lecharny A."/>
            <person name="Aubourg S."/>
            <person name="Chefdor F."/>
            <person name="Cooke R."/>
            <person name="Berger C."/>
            <person name="Monfort A."/>
            <person name="Casacuberta E."/>
            <person name="Gibbons T."/>
            <person name="Weber N."/>
            <person name="Vandenbol M."/>
            <person name="Bargues M."/>
            <person name="Terol J."/>
            <person name="Torres A."/>
            <person name="Perez-Perez A."/>
            <person name="Purnelle B."/>
            <person name="Bent E."/>
            <person name="Johnson S."/>
            <person name="Tacon D."/>
            <person name="Jesse T."/>
            <person name="Heijnen L."/>
            <person name="Schwarz S."/>
            <person name="Scholler P."/>
            <person name="Heber S."/>
            <person name="Francs P."/>
            <person name="Bielke C."/>
            <person name="Frishman D."/>
            <person name="Haase D."/>
            <person name="Lemcke K."/>
            <person name="Mewes H.-W."/>
            <person name="Stocker S."/>
            <person name="Zaccaria P."/>
            <person name="Bevan M."/>
            <person name="Wilson R.K."/>
            <person name="de la Bastide M."/>
            <person name="Habermann K."/>
            <person name="Parnell L."/>
            <person name="Dedhia N."/>
            <person name="Gnoj L."/>
            <person name="Schutz K."/>
            <person name="Huang E."/>
            <person name="Spiegel L."/>
            <person name="Sekhon M."/>
            <person name="Murray J."/>
            <person name="Sheet P."/>
            <person name="Cordes M."/>
            <person name="Abu-Threideh J."/>
            <person name="Stoneking T."/>
            <person name="Kalicki J."/>
            <person name="Graves T."/>
            <person name="Harmon G."/>
            <person name="Edwards J."/>
            <person name="Latreille P."/>
            <person name="Courtney L."/>
            <person name="Cloud J."/>
            <person name="Abbott A."/>
            <person name="Scott K."/>
            <person name="Johnson D."/>
            <person name="Minx P."/>
            <person name="Bentley D."/>
            <person name="Fulton B."/>
            <person name="Miller N."/>
            <person name="Greco T."/>
            <person name="Kemp K."/>
            <person name="Kramer J."/>
            <person name="Fulton L."/>
            <person name="Mardis E."/>
            <person name="Dante M."/>
            <person name="Pepin K."/>
            <person name="Hillier L.W."/>
            <person name="Nelson J."/>
            <person name="Spieth J."/>
            <person name="Ryan E."/>
            <person name="Andrews S."/>
            <person name="Geisel C."/>
            <person name="Layman D."/>
            <person name="Du H."/>
            <person name="Ali J."/>
            <person name="Berghoff A."/>
            <person name="Jones K."/>
            <person name="Drone K."/>
            <person name="Cotton M."/>
            <person name="Joshu C."/>
            <person name="Antonoiu B."/>
            <person name="Zidanic M."/>
            <person name="Strong C."/>
            <person name="Sun H."/>
            <person name="Lamar B."/>
            <person name="Yordan C."/>
            <person name="Ma P."/>
            <person name="Zhong J."/>
            <person name="Preston R."/>
            <person name="Vil D."/>
            <person name="Shekher M."/>
            <person name="Matero A."/>
            <person name="Shah R."/>
            <person name="Swaby I.K."/>
            <person name="O'Shaughnessy A."/>
            <person name="Rodriguez M."/>
            <person name="Hoffman J."/>
            <person name="Till S."/>
            <person name="Granat S."/>
            <person name="Shohdy N."/>
            <person name="Hasegawa A."/>
            <person name="Hameed A."/>
            <person name="Lodhi M."/>
            <person name="Johnson A."/>
            <person name="Chen E."/>
            <person name="Marra M.A."/>
            <person name="Martienssen R."/>
            <person name="McCombie W.R."/>
        </authorList>
    </citation>
    <scope>NUCLEOTIDE SEQUENCE [LARGE SCALE GENOMIC DNA]</scope>
    <source>
        <strain>cv. Columbia</strain>
    </source>
</reference>
<reference key="2">
    <citation type="journal article" date="2017" name="Plant J.">
        <title>Araport11: a complete reannotation of the Arabidopsis thaliana reference genome.</title>
        <authorList>
            <person name="Cheng C.Y."/>
            <person name="Krishnakumar V."/>
            <person name="Chan A.P."/>
            <person name="Thibaud-Nissen F."/>
            <person name="Schobel S."/>
            <person name="Town C.D."/>
        </authorList>
    </citation>
    <scope>GENOME REANNOTATION</scope>
    <source>
        <strain>cv. Columbia</strain>
    </source>
</reference>
<reference key="3">
    <citation type="journal article" date="2003" name="Science">
        <title>Empirical analysis of transcriptional activity in the Arabidopsis genome.</title>
        <authorList>
            <person name="Yamada K."/>
            <person name="Lim J."/>
            <person name="Dale J.M."/>
            <person name="Chen H."/>
            <person name="Shinn P."/>
            <person name="Palm C.J."/>
            <person name="Southwick A.M."/>
            <person name="Wu H.C."/>
            <person name="Kim C.J."/>
            <person name="Nguyen M."/>
            <person name="Pham P.K."/>
            <person name="Cheuk R.F."/>
            <person name="Karlin-Newmann G."/>
            <person name="Liu S.X."/>
            <person name="Lam B."/>
            <person name="Sakano H."/>
            <person name="Wu T."/>
            <person name="Yu G."/>
            <person name="Miranda M."/>
            <person name="Quach H.L."/>
            <person name="Tripp M."/>
            <person name="Chang C.H."/>
            <person name="Lee J.M."/>
            <person name="Toriumi M.J."/>
            <person name="Chan M.M."/>
            <person name="Tang C.C."/>
            <person name="Onodera C.S."/>
            <person name="Deng J.M."/>
            <person name="Akiyama K."/>
            <person name="Ansari Y."/>
            <person name="Arakawa T."/>
            <person name="Banh J."/>
            <person name="Banno F."/>
            <person name="Bowser L."/>
            <person name="Brooks S.Y."/>
            <person name="Carninci P."/>
            <person name="Chao Q."/>
            <person name="Choy N."/>
            <person name="Enju A."/>
            <person name="Goldsmith A.D."/>
            <person name="Gurjal M."/>
            <person name="Hansen N.F."/>
            <person name="Hayashizaki Y."/>
            <person name="Johnson-Hopson C."/>
            <person name="Hsuan V.W."/>
            <person name="Iida K."/>
            <person name="Karnes M."/>
            <person name="Khan S."/>
            <person name="Koesema E."/>
            <person name="Ishida J."/>
            <person name="Jiang P.X."/>
            <person name="Jones T."/>
            <person name="Kawai J."/>
            <person name="Kamiya A."/>
            <person name="Meyers C."/>
            <person name="Nakajima M."/>
            <person name="Narusaka M."/>
            <person name="Seki M."/>
            <person name="Sakurai T."/>
            <person name="Satou M."/>
            <person name="Tamse R."/>
            <person name="Vaysberg M."/>
            <person name="Wallender E.K."/>
            <person name="Wong C."/>
            <person name="Yamamura Y."/>
            <person name="Yuan S."/>
            <person name="Shinozaki K."/>
            <person name="Davis R.W."/>
            <person name="Theologis A."/>
            <person name="Ecker J.R."/>
        </authorList>
    </citation>
    <scope>NUCLEOTIDE SEQUENCE [LARGE SCALE MRNA]</scope>
    <source>
        <strain>cv. Columbia</strain>
    </source>
</reference>
<reference key="4">
    <citation type="journal article" date="2001" name="Plant Physiol.">
        <title>The organization of cytoplasmic ribosomal protein genes in the Arabidopsis genome.</title>
        <authorList>
            <person name="Barakat A."/>
            <person name="Szick-Miranda K."/>
            <person name="Chang I.-F."/>
            <person name="Guyot R."/>
            <person name="Blanc G."/>
            <person name="Cooke R."/>
            <person name="Delseny M."/>
            <person name="Bailey-Serres J."/>
        </authorList>
    </citation>
    <scope>GENE FAMILY ORGANIZATION</scope>
    <scope>NOMENCLATURE</scope>
</reference>
<reference key="5">
    <citation type="journal article" date="2007" name="Mol. Cell. Proteomics">
        <title>Multidimensional protein identification technology (MudPIT) analysis of ubiquitinated proteins in plants.</title>
        <authorList>
            <person name="Maor R."/>
            <person name="Jones A."/>
            <person name="Nuehse T.S."/>
            <person name="Studholme D.J."/>
            <person name="Peck S.C."/>
            <person name="Shirasu K."/>
        </authorList>
    </citation>
    <scope>IDENTIFICATION BY MASS SPECTROMETRY [LARGE SCALE ANALYSIS]</scope>
    <source>
        <strain>cv. Landsberg erecta</strain>
    </source>
</reference>
<reference key="6">
    <citation type="journal article" date="2023" name="Plant Cell">
        <title>An updated nomenclature for plant ribosomal protein genes.</title>
        <authorList>
            <person name="Scarpin M.R."/>
            <person name="Busche M."/>
            <person name="Martinez R.E."/>
            <person name="Harper L.C."/>
            <person name="Reiser L."/>
            <person name="Szakonyi D."/>
            <person name="Merchante C."/>
            <person name="Lan T."/>
            <person name="Xiong W."/>
            <person name="Mo B."/>
            <person name="Tang G."/>
            <person name="Chen X."/>
            <person name="Bailey-Serres J."/>
            <person name="Browning K.S."/>
            <person name="Brunkard J.O."/>
        </authorList>
    </citation>
    <scope>NOMENCLATURE</scope>
</reference>
<proteinExistence type="evidence at protein level"/>
<comment type="similarity">
    <text evidence="2">Belongs to the eukaryotic ribosomal protein eL14 family.</text>
</comment>
<accession>Q9T043</accession>
<name>RL142_ARATH</name>
<evidence type="ECO:0000303" key="1">
    <source>
    </source>
</evidence>
<evidence type="ECO:0000305" key="2"/>
<keyword id="KW-1185">Reference proteome</keyword>
<keyword id="KW-0687">Ribonucleoprotein</keyword>
<keyword id="KW-0689">Ribosomal protein</keyword>
<organism>
    <name type="scientific">Arabidopsis thaliana</name>
    <name type="common">Mouse-ear cress</name>
    <dbReference type="NCBI Taxonomy" id="3702"/>
    <lineage>
        <taxon>Eukaryota</taxon>
        <taxon>Viridiplantae</taxon>
        <taxon>Streptophyta</taxon>
        <taxon>Embryophyta</taxon>
        <taxon>Tracheophyta</taxon>
        <taxon>Spermatophyta</taxon>
        <taxon>Magnoliopsida</taxon>
        <taxon>eudicotyledons</taxon>
        <taxon>Gunneridae</taxon>
        <taxon>Pentapetalae</taxon>
        <taxon>rosids</taxon>
        <taxon>malvids</taxon>
        <taxon>Brassicales</taxon>
        <taxon>Brassicaceae</taxon>
        <taxon>Camelineae</taxon>
        <taxon>Arabidopsis</taxon>
    </lineage>
</organism>
<gene>
    <name type="primary">RPL14B</name>
    <name type="ordered locus">At4g27090</name>
    <name type="ORF">T24A18.40</name>
</gene>
<dbReference type="EMBL" id="AL035680">
    <property type="protein sequence ID" value="CAB38839.1"/>
    <property type="molecule type" value="Genomic_DNA"/>
</dbReference>
<dbReference type="EMBL" id="AL161566">
    <property type="protein sequence ID" value="CAB79564.1"/>
    <property type="molecule type" value="Genomic_DNA"/>
</dbReference>
<dbReference type="EMBL" id="CP002687">
    <property type="protein sequence ID" value="AEE85299.1"/>
    <property type="molecule type" value="Genomic_DNA"/>
</dbReference>
<dbReference type="EMBL" id="AF378869">
    <property type="protein sequence ID" value="AAK55672.1"/>
    <property type="molecule type" value="mRNA"/>
</dbReference>
<dbReference type="EMBL" id="AY050473">
    <property type="protein sequence ID" value="AAK91486.1"/>
    <property type="molecule type" value="mRNA"/>
</dbReference>
<dbReference type="PIR" id="T06039">
    <property type="entry name" value="T06039"/>
</dbReference>
<dbReference type="RefSeq" id="NP_194439.1">
    <property type="nucleotide sequence ID" value="NM_118843.4"/>
</dbReference>
<dbReference type="SMR" id="Q9T043"/>
<dbReference type="BioGRID" id="14104">
    <property type="interactions" value="75"/>
</dbReference>
<dbReference type="FunCoup" id="Q9T043">
    <property type="interactions" value="3637"/>
</dbReference>
<dbReference type="IntAct" id="Q9T043">
    <property type="interactions" value="3"/>
</dbReference>
<dbReference type="STRING" id="3702.Q9T043"/>
<dbReference type="PaxDb" id="3702-AT4G27090.1"/>
<dbReference type="ProteomicsDB" id="226328"/>
<dbReference type="EnsemblPlants" id="AT4G27090.1">
    <property type="protein sequence ID" value="AT4G27090.1"/>
    <property type="gene ID" value="AT4G27090"/>
</dbReference>
<dbReference type="GeneID" id="828817"/>
<dbReference type="Gramene" id="AT4G27090.1">
    <property type="protein sequence ID" value="AT4G27090.1"/>
    <property type="gene ID" value="AT4G27090"/>
</dbReference>
<dbReference type="KEGG" id="ath:AT4G27090"/>
<dbReference type="Araport" id="AT4G27090"/>
<dbReference type="TAIR" id="AT4G27090">
    <property type="gene designation" value="RPL14B"/>
</dbReference>
<dbReference type="eggNOG" id="KOG3421">
    <property type="taxonomic scope" value="Eukaryota"/>
</dbReference>
<dbReference type="HOGENOM" id="CLU_082438_2_1_1"/>
<dbReference type="InParanoid" id="Q9T043"/>
<dbReference type="OMA" id="KLCFVVD"/>
<dbReference type="OrthoDB" id="1047465at2759"/>
<dbReference type="PhylomeDB" id="Q9T043"/>
<dbReference type="CD-CODE" id="4299E36E">
    <property type="entry name" value="Nucleolus"/>
</dbReference>
<dbReference type="PRO" id="PR:Q9T043"/>
<dbReference type="Proteomes" id="UP000006548">
    <property type="component" value="Chromosome 4"/>
</dbReference>
<dbReference type="ExpressionAtlas" id="Q9T043">
    <property type="expression patterns" value="baseline and differential"/>
</dbReference>
<dbReference type="GO" id="GO:0005829">
    <property type="term" value="C:cytosol"/>
    <property type="evidence" value="ECO:0007005"/>
    <property type="project" value="TAIR"/>
</dbReference>
<dbReference type="GO" id="GO:0022625">
    <property type="term" value="C:cytosolic large ribosomal subunit"/>
    <property type="evidence" value="ECO:0007005"/>
    <property type="project" value="TAIR"/>
</dbReference>
<dbReference type="GO" id="GO:0022626">
    <property type="term" value="C:cytosolic ribosome"/>
    <property type="evidence" value="ECO:0007005"/>
    <property type="project" value="TAIR"/>
</dbReference>
<dbReference type="GO" id="GO:0005783">
    <property type="term" value="C:endoplasmic reticulum"/>
    <property type="evidence" value="ECO:0007005"/>
    <property type="project" value="TAIR"/>
</dbReference>
<dbReference type="GO" id="GO:0005730">
    <property type="term" value="C:nucleolus"/>
    <property type="evidence" value="ECO:0007005"/>
    <property type="project" value="TAIR"/>
</dbReference>
<dbReference type="GO" id="GO:0000325">
    <property type="term" value="C:plant-type vacuole"/>
    <property type="evidence" value="ECO:0007005"/>
    <property type="project" value="TAIR"/>
</dbReference>
<dbReference type="GO" id="GO:0009506">
    <property type="term" value="C:plasmodesma"/>
    <property type="evidence" value="ECO:0007005"/>
    <property type="project" value="TAIR"/>
</dbReference>
<dbReference type="GO" id="GO:0005773">
    <property type="term" value="C:vacuole"/>
    <property type="evidence" value="ECO:0007005"/>
    <property type="project" value="TAIR"/>
</dbReference>
<dbReference type="GO" id="GO:0003729">
    <property type="term" value="F:mRNA binding"/>
    <property type="evidence" value="ECO:0000314"/>
    <property type="project" value="TAIR"/>
</dbReference>
<dbReference type="GO" id="GO:0003735">
    <property type="term" value="F:structural constituent of ribosome"/>
    <property type="evidence" value="ECO:0000314"/>
    <property type="project" value="CAFA"/>
</dbReference>
<dbReference type="GO" id="GO:0006412">
    <property type="term" value="P:translation"/>
    <property type="evidence" value="ECO:0007669"/>
    <property type="project" value="InterPro"/>
</dbReference>
<dbReference type="CDD" id="cd23702">
    <property type="entry name" value="eL14"/>
    <property type="match status" value="1"/>
</dbReference>
<dbReference type="FunFam" id="2.30.30.30:FF:000026">
    <property type="entry name" value="60S ribosomal protein L14-1"/>
    <property type="match status" value="1"/>
</dbReference>
<dbReference type="Gene3D" id="2.30.30.30">
    <property type="match status" value="1"/>
</dbReference>
<dbReference type="Gene3D" id="6.10.250.2270">
    <property type="match status" value="1"/>
</dbReference>
<dbReference type="InterPro" id="IPR014722">
    <property type="entry name" value="Rib_uL2_dom2"/>
</dbReference>
<dbReference type="InterPro" id="IPR039660">
    <property type="entry name" value="Ribosomal_eL14"/>
</dbReference>
<dbReference type="InterPro" id="IPR002784">
    <property type="entry name" value="Ribosomal_eL14_dom"/>
</dbReference>
<dbReference type="InterPro" id="IPR008991">
    <property type="entry name" value="Translation_prot_SH3-like_sf"/>
</dbReference>
<dbReference type="PANTHER" id="PTHR11127">
    <property type="entry name" value="60S RIBOSOMAL PROTEIN L14"/>
    <property type="match status" value="1"/>
</dbReference>
<dbReference type="PANTHER" id="PTHR11127:SF2">
    <property type="entry name" value="LARGE RIBOSOMAL SUBUNIT PROTEIN EL14"/>
    <property type="match status" value="1"/>
</dbReference>
<dbReference type="Pfam" id="PF01929">
    <property type="entry name" value="Ribosomal_L14e"/>
    <property type="match status" value="1"/>
</dbReference>
<dbReference type="SUPFAM" id="SSF50104">
    <property type="entry name" value="Translation proteins SH3-like domain"/>
    <property type="match status" value="1"/>
</dbReference>
<protein>
    <recommendedName>
        <fullName evidence="1">Large ribosomal subunit protein eL14y</fullName>
    </recommendedName>
    <alternativeName>
        <fullName>60S ribosomal protein L14-2</fullName>
    </alternativeName>
</protein>